<feature type="chain" id="PRO_1000031116" description="Ribonuclease HII">
    <location>
        <begin position="1"/>
        <end position="257"/>
    </location>
</feature>
<feature type="domain" description="RNase H type-2" evidence="2">
    <location>
        <begin position="72"/>
        <end position="257"/>
    </location>
</feature>
<feature type="binding site" evidence="1">
    <location>
        <position position="78"/>
    </location>
    <ligand>
        <name>a divalent metal cation</name>
        <dbReference type="ChEBI" id="CHEBI:60240"/>
    </ligand>
</feature>
<feature type="binding site" evidence="1">
    <location>
        <position position="79"/>
    </location>
    <ligand>
        <name>a divalent metal cation</name>
        <dbReference type="ChEBI" id="CHEBI:60240"/>
    </ligand>
</feature>
<feature type="binding site" evidence="1">
    <location>
        <position position="170"/>
    </location>
    <ligand>
        <name>a divalent metal cation</name>
        <dbReference type="ChEBI" id="CHEBI:60240"/>
    </ligand>
</feature>
<evidence type="ECO:0000255" key="1">
    <source>
        <dbReference type="HAMAP-Rule" id="MF_00052"/>
    </source>
</evidence>
<evidence type="ECO:0000255" key="2">
    <source>
        <dbReference type="PROSITE-ProRule" id="PRU01319"/>
    </source>
</evidence>
<reference key="1">
    <citation type="journal article" date="2007" name="J. Bacteriol.">
        <title>The complete genome sequence of Bacillus thuringiensis Al Hakam.</title>
        <authorList>
            <person name="Challacombe J.F."/>
            <person name="Altherr M.R."/>
            <person name="Xie G."/>
            <person name="Bhotika S.S."/>
            <person name="Brown N."/>
            <person name="Bruce D."/>
            <person name="Campbell C.S."/>
            <person name="Campbell M.L."/>
            <person name="Chen J."/>
            <person name="Chertkov O."/>
            <person name="Cleland C."/>
            <person name="Dimitrijevic M."/>
            <person name="Doggett N.A."/>
            <person name="Fawcett J.J."/>
            <person name="Glavina T."/>
            <person name="Goodwin L.A."/>
            <person name="Green L.D."/>
            <person name="Han C.S."/>
            <person name="Hill K.K."/>
            <person name="Hitchcock P."/>
            <person name="Jackson P.J."/>
            <person name="Keim P."/>
            <person name="Kewalramani A.R."/>
            <person name="Longmire J."/>
            <person name="Lucas S."/>
            <person name="Malfatti S."/>
            <person name="Martinez D."/>
            <person name="McMurry K."/>
            <person name="Meincke L.J."/>
            <person name="Misra M."/>
            <person name="Moseman B.L."/>
            <person name="Mundt M."/>
            <person name="Munk A.C."/>
            <person name="Okinaka R.T."/>
            <person name="Parson-Quintana B."/>
            <person name="Reilly L.P."/>
            <person name="Richardson P."/>
            <person name="Robinson D.L."/>
            <person name="Saunders E."/>
            <person name="Tapia R."/>
            <person name="Tesmer J.G."/>
            <person name="Thayer N."/>
            <person name="Thompson L.S."/>
            <person name="Tice H."/>
            <person name="Ticknor L.O."/>
            <person name="Wills P.L."/>
            <person name="Gilna P."/>
            <person name="Brettin T.S."/>
        </authorList>
    </citation>
    <scope>NUCLEOTIDE SEQUENCE [LARGE SCALE GENOMIC DNA]</scope>
    <source>
        <strain>Al Hakam</strain>
    </source>
</reference>
<comment type="function">
    <text evidence="1">Endonuclease that specifically degrades the RNA of RNA-DNA hybrids.</text>
</comment>
<comment type="catalytic activity">
    <reaction evidence="1">
        <text>Endonucleolytic cleavage to 5'-phosphomonoester.</text>
        <dbReference type="EC" id="3.1.26.4"/>
    </reaction>
</comment>
<comment type="cofactor">
    <cofactor evidence="1">
        <name>Mn(2+)</name>
        <dbReference type="ChEBI" id="CHEBI:29035"/>
    </cofactor>
    <cofactor evidence="1">
        <name>Mg(2+)</name>
        <dbReference type="ChEBI" id="CHEBI:18420"/>
    </cofactor>
    <text evidence="1">Manganese or magnesium. Binds 1 divalent metal ion per monomer in the absence of substrate. May bind a second metal ion after substrate binding.</text>
</comment>
<comment type="subcellular location">
    <subcellularLocation>
        <location evidence="1">Cytoplasm</location>
    </subcellularLocation>
</comment>
<comment type="similarity">
    <text evidence="1">Belongs to the RNase HII family.</text>
</comment>
<dbReference type="EC" id="3.1.26.4" evidence="1"/>
<dbReference type="EMBL" id="CP000485">
    <property type="protein sequence ID" value="ABK86703.1"/>
    <property type="molecule type" value="Genomic_DNA"/>
</dbReference>
<dbReference type="RefSeq" id="WP_001174721.1">
    <property type="nucleotide sequence ID" value="NC_008600.1"/>
</dbReference>
<dbReference type="SMR" id="A0RHL0"/>
<dbReference type="KEGG" id="btl:BALH_3468"/>
<dbReference type="HOGENOM" id="CLU_036532_2_1_9"/>
<dbReference type="GO" id="GO:0005737">
    <property type="term" value="C:cytoplasm"/>
    <property type="evidence" value="ECO:0007669"/>
    <property type="project" value="UniProtKB-SubCell"/>
</dbReference>
<dbReference type="GO" id="GO:0032299">
    <property type="term" value="C:ribonuclease H2 complex"/>
    <property type="evidence" value="ECO:0007669"/>
    <property type="project" value="TreeGrafter"/>
</dbReference>
<dbReference type="GO" id="GO:0030145">
    <property type="term" value="F:manganese ion binding"/>
    <property type="evidence" value="ECO:0007669"/>
    <property type="project" value="UniProtKB-UniRule"/>
</dbReference>
<dbReference type="GO" id="GO:0003723">
    <property type="term" value="F:RNA binding"/>
    <property type="evidence" value="ECO:0007669"/>
    <property type="project" value="InterPro"/>
</dbReference>
<dbReference type="GO" id="GO:0004523">
    <property type="term" value="F:RNA-DNA hybrid ribonuclease activity"/>
    <property type="evidence" value="ECO:0007669"/>
    <property type="project" value="UniProtKB-UniRule"/>
</dbReference>
<dbReference type="GO" id="GO:0043137">
    <property type="term" value="P:DNA replication, removal of RNA primer"/>
    <property type="evidence" value="ECO:0007669"/>
    <property type="project" value="TreeGrafter"/>
</dbReference>
<dbReference type="GO" id="GO:0006298">
    <property type="term" value="P:mismatch repair"/>
    <property type="evidence" value="ECO:0007669"/>
    <property type="project" value="TreeGrafter"/>
</dbReference>
<dbReference type="CDD" id="cd07182">
    <property type="entry name" value="RNase_HII_bacteria_HII_like"/>
    <property type="match status" value="1"/>
</dbReference>
<dbReference type="FunFam" id="3.30.420.10:FF:000006">
    <property type="entry name" value="Ribonuclease HII"/>
    <property type="match status" value="1"/>
</dbReference>
<dbReference type="Gene3D" id="3.30.420.10">
    <property type="entry name" value="Ribonuclease H-like superfamily/Ribonuclease H"/>
    <property type="match status" value="1"/>
</dbReference>
<dbReference type="HAMAP" id="MF_00052_B">
    <property type="entry name" value="RNase_HII_B"/>
    <property type="match status" value="1"/>
</dbReference>
<dbReference type="InterPro" id="IPR022898">
    <property type="entry name" value="RNase_HII"/>
</dbReference>
<dbReference type="InterPro" id="IPR001352">
    <property type="entry name" value="RNase_HII/HIII"/>
</dbReference>
<dbReference type="InterPro" id="IPR024567">
    <property type="entry name" value="RNase_HII/HIII_dom"/>
</dbReference>
<dbReference type="InterPro" id="IPR012337">
    <property type="entry name" value="RNaseH-like_sf"/>
</dbReference>
<dbReference type="InterPro" id="IPR036397">
    <property type="entry name" value="RNaseH_sf"/>
</dbReference>
<dbReference type="NCBIfam" id="NF000594">
    <property type="entry name" value="PRK00015.1-1"/>
    <property type="match status" value="1"/>
</dbReference>
<dbReference type="NCBIfam" id="NF000595">
    <property type="entry name" value="PRK00015.1-3"/>
    <property type="match status" value="1"/>
</dbReference>
<dbReference type="PANTHER" id="PTHR10954">
    <property type="entry name" value="RIBONUCLEASE H2 SUBUNIT A"/>
    <property type="match status" value="1"/>
</dbReference>
<dbReference type="PANTHER" id="PTHR10954:SF18">
    <property type="entry name" value="RIBONUCLEASE HII"/>
    <property type="match status" value="1"/>
</dbReference>
<dbReference type="Pfam" id="PF01351">
    <property type="entry name" value="RNase_HII"/>
    <property type="match status" value="1"/>
</dbReference>
<dbReference type="SUPFAM" id="SSF53098">
    <property type="entry name" value="Ribonuclease H-like"/>
    <property type="match status" value="1"/>
</dbReference>
<dbReference type="PROSITE" id="PS51975">
    <property type="entry name" value="RNASE_H_2"/>
    <property type="match status" value="1"/>
</dbReference>
<gene>
    <name evidence="1" type="primary">rnhB</name>
    <name type="ordered locus">BALH_3468</name>
</gene>
<accession>A0RHL0</accession>
<name>RNH2_BACAH</name>
<organism>
    <name type="scientific">Bacillus thuringiensis (strain Al Hakam)</name>
    <dbReference type="NCBI Taxonomy" id="412694"/>
    <lineage>
        <taxon>Bacteria</taxon>
        <taxon>Bacillati</taxon>
        <taxon>Bacillota</taxon>
        <taxon>Bacilli</taxon>
        <taxon>Bacillales</taxon>
        <taxon>Bacillaceae</taxon>
        <taxon>Bacillus</taxon>
        <taxon>Bacillus cereus group</taxon>
    </lineage>
</organism>
<keyword id="KW-0963">Cytoplasm</keyword>
<keyword id="KW-0255">Endonuclease</keyword>
<keyword id="KW-0378">Hydrolase</keyword>
<keyword id="KW-0464">Manganese</keyword>
<keyword id="KW-0479">Metal-binding</keyword>
<keyword id="KW-0540">Nuclease</keyword>
<proteinExistence type="inferred from homology"/>
<sequence>MQKVTIQEAEHLLQEIMSEEDDRFQILIKDERKGVQKLILKWYKQKELAQKEKEKFLEMSKYENALREKGLTYIAGIDEVGRGPLAGPVVTAAVILPEDFYIPGLNDSKKLSEAKRERFYGEIKAKAIAIGVGIVSPQVIDEINIYQATKQAMLDAIANLSCTPEYLLIDAMKLPTPIPQTSIIKGDAKSISISAASIIAKVTRDRMMKELGEKYPAYGFEQHMGYGTKQHLEAIEAHGVLEEHRKSFAPIKDMIQK</sequence>
<protein>
    <recommendedName>
        <fullName evidence="1">Ribonuclease HII</fullName>
        <shortName evidence="1">RNase HII</shortName>
        <ecNumber evidence="1">3.1.26.4</ecNumber>
    </recommendedName>
</protein>